<sequence length="1345" mass="150295">MVYSYSEKKRIRKDFGKRPQVLDIPYLLSIQLDSFKKFTDQDPTGERGLEAAFRSVFPIKSFSGNSELQYVSYKLGEPVFDVKECQIRGVTYSAPLRVKLRMVLYDREAAAGTVKDIKEQEVYMGDIPLMTDNGTFVINGTERVIVSQLHRSPGVFFDHDRGKTHSSGKVLYNARIIPYRGSWLDFEFDPKDALFVRIDRRRKLPATIILRALEYSTQEILDLFFERVEFKIKKDTLVMTLVPERLRGETASYDIKDAEGTVLVEAGRRVTARHIRQLEKTNTTELEVPVEYIVGKYAAQDYIDPDTGEVLVSANSEISLEDLAKLSLAGIKELSTLYINELDHGAYISDTLRIDPTTNRLEALVEIYRMMRPGEPPTKDAAEALFQNLFFSEERYDLSKVGRMKFNRRLSIPDDEGSGVLSKEDIVAVMKNIIHIRNGFDEVDDIDHLGNRRIRSVGEMAENQFRVGLVRVERAVRERLSLGDLNELMPQDLINAKPISAAVKEFFGSSQLSQFMDQNNPLSEVTHKRRISALGPGGLTRERAGFEVRDVHPTHYGRLCPIETPEGPNIGLINSLASFARTNSYGFLETPYRKVVDGVITDEVEYLSAIEEGRYVIAQANIEVDSEGRMVEEQIACRHKGESTFMRASDIQYMDVSPQQIISVAASLIPFLEHDDANRALMGANMQRQAVPTLRSEKPLVGTGIERTLAVDSGVVVAAKRGGVIDYVDASRIVVKVNEDELRPGEAGIDIYNLTKYTRSNQNTCINQRPCCSVGEPVVRGDVLADGPSTDLGDLALGQNMRIAFMPWNGYNFEDSILISERVAQEDRFTTIHIQELSCIARDTKLGSEEITADIPNVGESALSKLDESGIVYIGAEVKGGDILVGKVTPKGETQLTPEEKLLRAIFGEKASDVKDSSLRVPNSVKGTIIDVQVFTRDGVEKDKRAIEIEEMHIAQARKDLGEEFKILEEGVLSRARNLLLSAGFSEAQIAALPRKDVLVQVIDDEAKQTELEQLAEQHEELKADFDKKFEIKRRKITQGDDLAPGVLKIVKVYLAVKRTIQPGDKMAGRHGNKGVISKINPIEDMPYDEQGNPVDIVLNPLGVPSRMNIGQVLEVHLGAAAKGIGHKIAAMLEDQREKGLAEVRNYIKQVYELGDEVQQRVDIDSFTDDELLRLANNLKGGIPVATPAFDGAKEKEIKQMLELAGLPTSGQLKLFDGRTGNEFERPVTVGYMYMLKLNHLVDDKMHARSTGSYSLVTQQPLGGKAQFGGQRFGEMEVWALEAYGAAYTLQEMLTVKSDDVNGRTQMYKNIVDGNHQMQPGMPESFNVLLKEIRSLGINIELDQE</sequence>
<comment type="function">
    <text evidence="1">DNA-dependent RNA polymerase catalyzes the transcription of DNA into RNA using the four ribonucleoside triphosphates as substrates.</text>
</comment>
<comment type="catalytic activity">
    <reaction evidence="1">
        <text>RNA(n) + a ribonucleoside 5'-triphosphate = RNA(n+1) + diphosphate</text>
        <dbReference type="Rhea" id="RHEA:21248"/>
        <dbReference type="Rhea" id="RHEA-COMP:14527"/>
        <dbReference type="Rhea" id="RHEA-COMP:17342"/>
        <dbReference type="ChEBI" id="CHEBI:33019"/>
        <dbReference type="ChEBI" id="CHEBI:61557"/>
        <dbReference type="ChEBI" id="CHEBI:140395"/>
        <dbReference type="EC" id="2.7.7.6"/>
    </reaction>
</comment>
<comment type="subunit">
    <text evidence="1">The RNAP catalytic core consists of 2 alpha, 1 beta, 1 beta' and 1 omega subunit. When a sigma factor is associated with the core the holoenzyme is formed, which can initiate transcription.</text>
</comment>
<comment type="similarity">
    <text evidence="1">Belongs to the RNA polymerase beta chain family.</text>
</comment>
<keyword id="KW-0240">DNA-directed RNA polymerase</keyword>
<keyword id="KW-0548">Nucleotidyltransferase</keyword>
<keyword id="KW-1185">Reference proteome</keyword>
<keyword id="KW-0804">Transcription</keyword>
<keyword id="KW-0808">Transferase</keyword>
<name>RPOB_SHEON</name>
<accession>Q8EK74</accession>
<protein>
    <recommendedName>
        <fullName evidence="1">DNA-directed RNA polymerase subunit beta</fullName>
        <shortName evidence="1">RNAP subunit beta</shortName>
        <ecNumber evidence="1">2.7.7.6</ecNumber>
    </recommendedName>
    <alternativeName>
        <fullName evidence="1">RNA polymerase subunit beta</fullName>
    </alternativeName>
    <alternativeName>
        <fullName evidence="1">Transcriptase subunit beta</fullName>
    </alternativeName>
</protein>
<evidence type="ECO:0000255" key="1">
    <source>
        <dbReference type="HAMAP-Rule" id="MF_01321"/>
    </source>
</evidence>
<gene>
    <name evidence="1" type="primary">rpoB</name>
    <name type="ordered locus">SO_0224</name>
</gene>
<organism>
    <name type="scientific">Shewanella oneidensis (strain ATCC 700550 / JCM 31522 / CIP 106686 / LMG 19005 / NCIMB 14063 / MR-1)</name>
    <dbReference type="NCBI Taxonomy" id="211586"/>
    <lineage>
        <taxon>Bacteria</taxon>
        <taxon>Pseudomonadati</taxon>
        <taxon>Pseudomonadota</taxon>
        <taxon>Gammaproteobacteria</taxon>
        <taxon>Alteromonadales</taxon>
        <taxon>Shewanellaceae</taxon>
        <taxon>Shewanella</taxon>
    </lineage>
</organism>
<dbReference type="EC" id="2.7.7.6" evidence="1"/>
<dbReference type="EMBL" id="AE014299">
    <property type="protein sequence ID" value="AAN53309.1"/>
    <property type="molecule type" value="Genomic_DNA"/>
</dbReference>
<dbReference type="RefSeq" id="NP_715864.1">
    <property type="nucleotide sequence ID" value="NC_004347.2"/>
</dbReference>
<dbReference type="RefSeq" id="WP_011070610.1">
    <property type="nucleotide sequence ID" value="NC_004347.2"/>
</dbReference>
<dbReference type="SMR" id="Q8EK74"/>
<dbReference type="STRING" id="211586.SO_0224"/>
<dbReference type="PaxDb" id="211586-SO_0224"/>
<dbReference type="KEGG" id="son:SO_0224"/>
<dbReference type="PATRIC" id="fig|211586.12.peg.212"/>
<dbReference type="eggNOG" id="COG0085">
    <property type="taxonomic scope" value="Bacteria"/>
</dbReference>
<dbReference type="HOGENOM" id="CLU_000524_4_1_6"/>
<dbReference type="OrthoDB" id="9803954at2"/>
<dbReference type="PhylomeDB" id="Q8EK74"/>
<dbReference type="BioCyc" id="SONE211586:G1GMP-213-MONOMER"/>
<dbReference type="Proteomes" id="UP000008186">
    <property type="component" value="Chromosome"/>
</dbReference>
<dbReference type="GO" id="GO:0000428">
    <property type="term" value="C:DNA-directed RNA polymerase complex"/>
    <property type="evidence" value="ECO:0007669"/>
    <property type="project" value="UniProtKB-KW"/>
</dbReference>
<dbReference type="GO" id="GO:0003677">
    <property type="term" value="F:DNA binding"/>
    <property type="evidence" value="ECO:0007669"/>
    <property type="project" value="UniProtKB-UniRule"/>
</dbReference>
<dbReference type="GO" id="GO:0003899">
    <property type="term" value="F:DNA-directed RNA polymerase activity"/>
    <property type="evidence" value="ECO:0007669"/>
    <property type="project" value="UniProtKB-UniRule"/>
</dbReference>
<dbReference type="GO" id="GO:0032549">
    <property type="term" value="F:ribonucleoside binding"/>
    <property type="evidence" value="ECO:0007669"/>
    <property type="project" value="InterPro"/>
</dbReference>
<dbReference type="GO" id="GO:0006351">
    <property type="term" value="P:DNA-templated transcription"/>
    <property type="evidence" value="ECO:0007669"/>
    <property type="project" value="UniProtKB-UniRule"/>
</dbReference>
<dbReference type="CDD" id="cd00653">
    <property type="entry name" value="RNA_pol_B_RPB2"/>
    <property type="match status" value="1"/>
</dbReference>
<dbReference type="FunFam" id="2.40.270.10:FF:000003">
    <property type="entry name" value="DNA-directed RNA polymerase subunit beta"/>
    <property type="match status" value="1"/>
</dbReference>
<dbReference type="FunFam" id="2.40.270.10:FF:000004">
    <property type="entry name" value="DNA-directed RNA polymerase subunit beta"/>
    <property type="match status" value="1"/>
</dbReference>
<dbReference type="FunFam" id="2.40.50.100:FF:000006">
    <property type="entry name" value="DNA-directed RNA polymerase subunit beta"/>
    <property type="match status" value="1"/>
</dbReference>
<dbReference type="FunFam" id="2.40.50.150:FF:000001">
    <property type="entry name" value="DNA-directed RNA polymerase subunit beta"/>
    <property type="match status" value="1"/>
</dbReference>
<dbReference type="FunFam" id="3.90.1100.10:FF:000002">
    <property type="entry name" value="DNA-directed RNA polymerase subunit beta"/>
    <property type="match status" value="1"/>
</dbReference>
<dbReference type="FunFam" id="3.90.1110.10:FF:000001">
    <property type="entry name" value="DNA-directed RNA polymerase subunit beta"/>
    <property type="match status" value="1"/>
</dbReference>
<dbReference type="FunFam" id="3.90.1110.10:FF:000004">
    <property type="entry name" value="DNA-directed RNA polymerase subunit beta"/>
    <property type="match status" value="1"/>
</dbReference>
<dbReference type="FunFam" id="3.90.1800.10:FF:000001">
    <property type="entry name" value="DNA-directed RNA polymerase subunit beta"/>
    <property type="match status" value="1"/>
</dbReference>
<dbReference type="Gene3D" id="2.40.50.100">
    <property type="match status" value="1"/>
</dbReference>
<dbReference type="Gene3D" id="2.40.50.150">
    <property type="match status" value="1"/>
</dbReference>
<dbReference type="Gene3D" id="3.90.1100.10">
    <property type="match status" value="2"/>
</dbReference>
<dbReference type="Gene3D" id="2.30.150.10">
    <property type="entry name" value="DNA-directed RNA polymerase, beta subunit, external 1 domain"/>
    <property type="match status" value="1"/>
</dbReference>
<dbReference type="Gene3D" id="2.40.270.10">
    <property type="entry name" value="DNA-directed RNA polymerase, subunit 2, domain 6"/>
    <property type="match status" value="1"/>
</dbReference>
<dbReference type="Gene3D" id="3.90.1800.10">
    <property type="entry name" value="RNA polymerase alpha subunit dimerisation domain"/>
    <property type="match status" value="1"/>
</dbReference>
<dbReference type="Gene3D" id="3.90.1110.10">
    <property type="entry name" value="RNA polymerase Rpb2, domain 2"/>
    <property type="match status" value="1"/>
</dbReference>
<dbReference type="HAMAP" id="MF_01321">
    <property type="entry name" value="RNApol_bact_RpoB"/>
    <property type="match status" value="1"/>
</dbReference>
<dbReference type="InterPro" id="IPR042107">
    <property type="entry name" value="DNA-dir_RNA_pol_bsu_ext_1_sf"/>
</dbReference>
<dbReference type="InterPro" id="IPR019462">
    <property type="entry name" value="DNA-dir_RNA_pol_bsu_external_1"/>
</dbReference>
<dbReference type="InterPro" id="IPR015712">
    <property type="entry name" value="DNA-dir_RNA_pol_su2"/>
</dbReference>
<dbReference type="InterPro" id="IPR007120">
    <property type="entry name" value="DNA-dir_RNAP_su2_dom"/>
</dbReference>
<dbReference type="InterPro" id="IPR037033">
    <property type="entry name" value="DNA-dir_RNAP_su2_hyb_sf"/>
</dbReference>
<dbReference type="InterPro" id="IPR010243">
    <property type="entry name" value="RNA_pol_bsu_bac"/>
</dbReference>
<dbReference type="InterPro" id="IPR007121">
    <property type="entry name" value="RNA_pol_bsu_CS"/>
</dbReference>
<dbReference type="InterPro" id="IPR007644">
    <property type="entry name" value="RNA_pol_bsu_protrusion"/>
</dbReference>
<dbReference type="InterPro" id="IPR007642">
    <property type="entry name" value="RNA_pol_Rpb2_2"/>
</dbReference>
<dbReference type="InterPro" id="IPR037034">
    <property type="entry name" value="RNA_pol_Rpb2_2_sf"/>
</dbReference>
<dbReference type="InterPro" id="IPR007645">
    <property type="entry name" value="RNA_pol_Rpb2_3"/>
</dbReference>
<dbReference type="InterPro" id="IPR007641">
    <property type="entry name" value="RNA_pol_Rpb2_7"/>
</dbReference>
<dbReference type="InterPro" id="IPR014724">
    <property type="entry name" value="RNA_pol_RPB2_OB-fold"/>
</dbReference>
<dbReference type="NCBIfam" id="NF001616">
    <property type="entry name" value="PRK00405.1"/>
    <property type="match status" value="1"/>
</dbReference>
<dbReference type="NCBIfam" id="TIGR02013">
    <property type="entry name" value="rpoB"/>
    <property type="match status" value="1"/>
</dbReference>
<dbReference type="PANTHER" id="PTHR20856">
    <property type="entry name" value="DNA-DIRECTED RNA POLYMERASE I SUBUNIT 2"/>
    <property type="match status" value="1"/>
</dbReference>
<dbReference type="Pfam" id="PF04563">
    <property type="entry name" value="RNA_pol_Rpb2_1"/>
    <property type="match status" value="1"/>
</dbReference>
<dbReference type="Pfam" id="PF04561">
    <property type="entry name" value="RNA_pol_Rpb2_2"/>
    <property type="match status" value="2"/>
</dbReference>
<dbReference type="Pfam" id="PF04565">
    <property type="entry name" value="RNA_pol_Rpb2_3"/>
    <property type="match status" value="1"/>
</dbReference>
<dbReference type="Pfam" id="PF10385">
    <property type="entry name" value="RNA_pol_Rpb2_45"/>
    <property type="match status" value="1"/>
</dbReference>
<dbReference type="Pfam" id="PF00562">
    <property type="entry name" value="RNA_pol_Rpb2_6"/>
    <property type="match status" value="1"/>
</dbReference>
<dbReference type="Pfam" id="PF04560">
    <property type="entry name" value="RNA_pol_Rpb2_7"/>
    <property type="match status" value="1"/>
</dbReference>
<dbReference type="SUPFAM" id="SSF64484">
    <property type="entry name" value="beta and beta-prime subunits of DNA dependent RNA-polymerase"/>
    <property type="match status" value="1"/>
</dbReference>
<dbReference type="PROSITE" id="PS01166">
    <property type="entry name" value="RNA_POL_BETA"/>
    <property type="match status" value="1"/>
</dbReference>
<feature type="chain" id="PRO_0000047954" description="DNA-directed RNA polymerase subunit beta">
    <location>
        <begin position="1"/>
        <end position="1345"/>
    </location>
</feature>
<proteinExistence type="inferred from homology"/>
<reference key="1">
    <citation type="journal article" date="2002" name="Nat. Biotechnol.">
        <title>Genome sequence of the dissimilatory metal ion-reducing bacterium Shewanella oneidensis.</title>
        <authorList>
            <person name="Heidelberg J.F."/>
            <person name="Paulsen I.T."/>
            <person name="Nelson K.E."/>
            <person name="Gaidos E.J."/>
            <person name="Nelson W.C."/>
            <person name="Read T.D."/>
            <person name="Eisen J.A."/>
            <person name="Seshadri R."/>
            <person name="Ward N.L."/>
            <person name="Methe B.A."/>
            <person name="Clayton R.A."/>
            <person name="Meyer T."/>
            <person name="Tsapin A."/>
            <person name="Scott J."/>
            <person name="Beanan M.J."/>
            <person name="Brinkac L.M."/>
            <person name="Daugherty S.C."/>
            <person name="DeBoy R.T."/>
            <person name="Dodson R.J."/>
            <person name="Durkin A.S."/>
            <person name="Haft D.H."/>
            <person name="Kolonay J.F."/>
            <person name="Madupu R."/>
            <person name="Peterson J.D."/>
            <person name="Umayam L.A."/>
            <person name="White O."/>
            <person name="Wolf A.M."/>
            <person name="Vamathevan J.J."/>
            <person name="Weidman J.F."/>
            <person name="Impraim M."/>
            <person name="Lee K."/>
            <person name="Berry K.J."/>
            <person name="Lee C."/>
            <person name="Mueller J."/>
            <person name="Khouri H.M."/>
            <person name="Gill J."/>
            <person name="Utterback T.R."/>
            <person name="McDonald L.A."/>
            <person name="Feldblyum T.V."/>
            <person name="Smith H.O."/>
            <person name="Venter J.C."/>
            <person name="Nealson K.H."/>
            <person name="Fraser C.M."/>
        </authorList>
    </citation>
    <scope>NUCLEOTIDE SEQUENCE [LARGE SCALE GENOMIC DNA]</scope>
    <source>
        <strain>ATCC 700550 / JCM 31522 / CIP 106686 / LMG 19005 / NCIMB 14063 / MR-1</strain>
    </source>
</reference>